<name>VE1_HPV53</name>
<feature type="chain" id="PRO_0000133148" description="Replication protein E1">
    <location>
        <begin position="1" status="less than"/>
        <end position="52" status="greater than"/>
    </location>
</feature>
<feature type="non-terminal residue">
    <location>
        <position position="1"/>
    </location>
</feature>
<feature type="non-terminal residue">
    <location>
        <position position="52"/>
    </location>
</feature>
<proteinExistence type="inferred from homology"/>
<keyword id="KW-0067">ATP-binding</keyword>
<keyword id="KW-0235">DNA replication</keyword>
<keyword id="KW-0238">DNA-binding</keyword>
<keyword id="KW-0244">Early protein</keyword>
<keyword id="KW-0347">Helicase</keyword>
<keyword id="KW-1048">Host nucleus</keyword>
<keyword id="KW-0378">Hydrolase</keyword>
<keyword id="KW-0413">Isomerase</keyword>
<keyword id="KW-0547">Nucleotide-binding</keyword>
<reference key="1">
    <citation type="journal article" date="1992" name="J. Virol.">
        <title>Phylogenetic analysis of 48 papillomavirus types and 28 subtypes and variants: a showcase for the molecular evolution of DNA viruses.</title>
        <authorList>
            <person name="Chan S.-Y."/>
            <person name="Bernard H.U."/>
            <person name="Ong C.K."/>
            <person name="Chan S.P."/>
            <person name="Birgit H."/>
            <person name="Delius H."/>
        </authorList>
    </citation>
    <scope>NUCLEOTIDE SEQUENCE [GENOMIC DNA]</scope>
</reference>
<gene>
    <name type="primary">E1</name>
</gene>
<evidence type="ECO:0000250" key="1">
    <source>
        <dbReference type="UniProtKB" id="P03116"/>
    </source>
</evidence>
<evidence type="ECO:0000305" key="2"/>
<organismHost>
    <name type="scientific">Homo sapiens</name>
    <name type="common">Human</name>
    <dbReference type="NCBI Taxonomy" id="9606"/>
</organismHost>
<protein>
    <recommendedName>
        <fullName>Replication protein E1</fullName>
        <ecNumber evidence="1">5.6.2.4</ecNumber>
    </recommendedName>
    <alternativeName>
        <fullName>ATP-dependent helicase E1</fullName>
    </alternativeName>
    <alternativeName>
        <fullName evidence="2">DNA 3'-5' helicase E1</fullName>
    </alternativeName>
</protein>
<organism>
    <name type="scientific">Human papillomavirus type 53</name>
    <dbReference type="NCBI Taxonomy" id="333765"/>
    <lineage>
        <taxon>Viruses</taxon>
        <taxon>Monodnaviria</taxon>
        <taxon>Shotokuvirae</taxon>
        <taxon>Cossaviricota</taxon>
        <taxon>Papovaviricetes</taxon>
        <taxon>Zurhausenvirales</taxon>
        <taxon>Papillomaviridae</taxon>
        <taxon>Firstpapillomavirinae</taxon>
        <taxon>Alphapapillomavirus</taxon>
        <taxon>Alphapapillomavirus 6</taxon>
    </lineage>
</organism>
<accession>Q02513</accession>
<dbReference type="EC" id="5.6.2.4" evidence="1"/>
<dbReference type="EMBL" id="M96313">
    <property type="protein sequence ID" value="AAA47002.1"/>
    <property type="molecule type" value="Genomic_DNA"/>
</dbReference>
<dbReference type="SMR" id="Q02513"/>
<dbReference type="GO" id="GO:0042025">
    <property type="term" value="C:host cell nucleus"/>
    <property type="evidence" value="ECO:0007669"/>
    <property type="project" value="UniProtKB-SubCell"/>
</dbReference>
<dbReference type="GO" id="GO:0005524">
    <property type="term" value="F:ATP binding"/>
    <property type="evidence" value="ECO:0007669"/>
    <property type="project" value="UniProtKB-KW"/>
</dbReference>
<dbReference type="GO" id="GO:0016887">
    <property type="term" value="F:ATP hydrolysis activity"/>
    <property type="evidence" value="ECO:0007669"/>
    <property type="project" value="RHEA"/>
</dbReference>
<dbReference type="GO" id="GO:0003677">
    <property type="term" value="F:DNA binding"/>
    <property type="evidence" value="ECO:0007669"/>
    <property type="project" value="UniProtKB-KW"/>
</dbReference>
<dbReference type="GO" id="GO:0003678">
    <property type="term" value="F:DNA helicase activity"/>
    <property type="evidence" value="ECO:0007669"/>
    <property type="project" value="InterPro"/>
</dbReference>
<dbReference type="GO" id="GO:0006260">
    <property type="term" value="P:DNA replication"/>
    <property type="evidence" value="ECO:0007669"/>
    <property type="project" value="UniProtKB-KW"/>
</dbReference>
<dbReference type="Gene3D" id="1.10.10.510">
    <property type="entry name" value="Zinc finger, large T-antigen D1 domain"/>
    <property type="match status" value="1"/>
</dbReference>
<dbReference type="InterPro" id="IPR027417">
    <property type="entry name" value="P-loop_NTPase"/>
</dbReference>
<dbReference type="InterPro" id="IPR001177">
    <property type="entry name" value="PPV_DNA_helicase_E1_C"/>
</dbReference>
<dbReference type="InterPro" id="IPR037102">
    <property type="entry name" value="Znf_lg_T-Ag_D1_dom_sf"/>
</dbReference>
<dbReference type="Pfam" id="PF00519">
    <property type="entry name" value="PPV_E1_C"/>
    <property type="match status" value="1"/>
</dbReference>
<dbReference type="SUPFAM" id="SSF52540">
    <property type="entry name" value="P-loop containing nucleoside triphosphate hydrolases"/>
    <property type="match status" value="1"/>
</dbReference>
<sequence length="52" mass="6167">AFHYAQLADVDSNAQAFLKSNMQAKYVKDCGIMCRHYKRAQQQQMNMKQWIK</sequence>
<comment type="function">
    <text evidence="1">ATP-dependent DNA 3'-5' helicase required for initiation of viral DNA replication. It forms a complex with the viral E2 protein. The E1-E2 complex binds to the replication origin which contains binding sites for both proteins. During the initial step, a dimer of E1 interacts with a dimer of protein E2 leading to a complex that binds the viral origin of replication with high specificity. Then, a second dimer of E1 displaces the E2 dimer in an ATP-dependent manner to form the E1 tetramer. Following this, two E1 monomers are added to each half of the site, which results in the formation of two E1 trimers on the viral ori. Subsequently, two hexamers will be created. The double hexamer acts as a bi-directional helicase machinery and unwinds the viral DNA and then recruits the host DNA polymerase to start replication.</text>
</comment>
<comment type="catalytic activity">
    <reaction evidence="1">
        <text>Couples ATP hydrolysis with the unwinding of duplex DNA by translocating in the 3'-5' direction.</text>
        <dbReference type="EC" id="5.6.2.4"/>
    </reaction>
</comment>
<comment type="catalytic activity">
    <reaction evidence="1">
        <text>ATP + H2O = ADP + phosphate + H(+)</text>
        <dbReference type="Rhea" id="RHEA:13065"/>
        <dbReference type="ChEBI" id="CHEBI:15377"/>
        <dbReference type="ChEBI" id="CHEBI:15378"/>
        <dbReference type="ChEBI" id="CHEBI:30616"/>
        <dbReference type="ChEBI" id="CHEBI:43474"/>
        <dbReference type="ChEBI" id="CHEBI:456216"/>
        <dbReference type="EC" id="5.6.2.4"/>
    </reaction>
</comment>
<comment type="subcellular location">
    <subcellularLocation>
        <location evidence="1">Host nucleus</location>
    </subcellularLocation>
</comment>
<comment type="similarity">
    <text evidence="2">Belongs to the papillomaviridae E1 protein family.</text>
</comment>